<protein>
    <recommendedName>
        <fullName evidence="4">UDP-glycosyltransferase 13</fullName>
        <shortName evidence="4">PlUGT13</shortName>
        <ecNumber evidence="3">2.4.1.170</ecNumber>
    </recommendedName>
    <alternativeName>
        <fullName evidence="4">Glycosyltransferase UGT88H1</fullName>
    </alternativeName>
    <alternativeName>
        <fullName evidence="6">UDP-glucose:isoflavone 7-O-glucosyltransferase KGT13</fullName>
    </alternativeName>
</protein>
<feature type="chain" id="PRO_0000439666" description="UDP-glycosyltransferase 13">
    <location>
        <begin position="1"/>
        <end position="451"/>
    </location>
</feature>
<feature type="active site" description="Proton acceptor" evidence="1">
    <location>
        <position position="15"/>
    </location>
</feature>
<feature type="active site" description="Charge relay" evidence="1">
    <location>
        <position position="93"/>
    </location>
</feature>
<feature type="binding site" evidence="2">
    <location>
        <position position="15"/>
    </location>
    <ligand>
        <name>an anthocyanidin</name>
        <dbReference type="ChEBI" id="CHEBI:143576"/>
    </ligand>
</feature>
<feature type="binding site" evidence="1">
    <location>
        <position position="326"/>
    </location>
    <ligand>
        <name>UDP-alpha-D-glucose</name>
        <dbReference type="ChEBI" id="CHEBI:58885"/>
    </ligand>
</feature>
<feature type="binding site" evidence="1">
    <location>
        <position position="328"/>
    </location>
    <ligand>
        <name>UDP-alpha-D-glucose</name>
        <dbReference type="ChEBI" id="CHEBI:58885"/>
    </ligand>
</feature>
<feature type="binding site" evidence="1">
    <location>
        <position position="343"/>
    </location>
    <ligand>
        <name>UDP-alpha-D-glucose</name>
        <dbReference type="ChEBI" id="CHEBI:58885"/>
    </ligand>
</feature>
<feature type="binding site" evidence="1">
    <location>
        <position position="346"/>
    </location>
    <ligand>
        <name>UDP-alpha-D-glucose</name>
        <dbReference type="ChEBI" id="CHEBI:58885"/>
    </ligand>
</feature>
<feature type="binding site" evidence="1">
    <location>
        <position position="347"/>
    </location>
    <ligand>
        <name>UDP-alpha-D-glucose</name>
        <dbReference type="ChEBI" id="CHEBI:58885"/>
    </ligand>
</feature>
<feature type="binding site" evidence="1">
    <location>
        <position position="348"/>
    </location>
    <ligand>
        <name>UDP-alpha-D-glucose</name>
        <dbReference type="ChEBI" id="CHEBI:58885"/>
    </ligand>
</feature>
<feature type="binding site" evidence="1">
    <location>
        <position position="351"/>
    </location>
    <ligand>
        <name>UDP-alpha-D-glucose</name>
        <dbReference type="ChEBI" id="CHEBI:58885"/>
    </ligand>
</feature>
<feature type="binding site" evidence="2">
    <location>
        <position position="366"/>
    </location>
    <ligand>
        <name>an anthocyanidin</name>
        <dbReference type="ChEBI" id="CHEBI:143576"/>
    </ligand>
</feature>
<feature type="binding site" evidence="1">
    <location>
        <position position="367"/>
    </location>
    <ligand>
        <name>UDP-alpha-D-glucose</name>
        <dbReference type="ChEBI" id="CHEBI:58885"/>
    </ligand>
</feature>
<feature type="binding site" evidence="1">
    <location>
        <position position="368"/>
    </location>
    <ligand>
        <name>UDP-alpha-D-glucose</name>
        <dbReference type="ChEBI" id="CHEBI:58885"/>
    </ligand>
</feature>
<keyword id="KW-0328">Glycosyltransferase</keyword>
<keyword id="KW-0808">Transferase</keyword>
<gene>
    <name evidence="4" type="primary">UGT13</name>
    <name evidence="4" type="synonym">UGT88H1</name>
</gene>
<evidence type="ECO:0000250" key="1">
    <source>
        <dbReference type="UniProtKB" id="A0A0A1HA03"/>
    </source>
</evidence>
<evidence type="ECO:0000250" key="2">
    <source>
        <dbReference type="UniProtKB" id="P51094"/>
    </source>
</evidence>
<evidence type="ECO:0000269" key="3">
    <source>
    </source>
</evidence>
<evidence type="ECO:0000303" key="4">
    <source>
    </source>
</evidence>
<evidence type="ECO:0000305" key="5"/>
<evidence type="ECO:0000312" key="6">
    <source>
        <dbReference type="EMBL" id="AGZ84546.1"/>
    </source>
</evidence>
<comment type="function">
    <text evidence="3">Isoflavone 7-O-glucosyltransferase converting daidzein to daidzin, genistein to genistin and formononetin to ononin (PubMed:24700248). Shows some activity toward the flavanones liquiritigenin and naringenin, but not toward cyanidin, isoliquiritigenin, apigenin, luteolin, kaempferol, quercetin, daidzin and puerarin (PubMed:24700248).</text>
</comment>
<comment type="catalytic activity">
    <reaction evidence="3">
        <text>a 7-hydroxyisoflavone + UDP-alpha-D-glucose = a 7-hydroxyisoflavone 7-O-beta-D-glucoside + UDP + H(+)</text>
        <dbReference type="Rhea" id="RHEA:56344"/>
        <dbReference type="ChEBI" id="CHEBI:15378"/>
        <dbReference type="ChEBI" id="CHEBI:55465"/>
        <dbReference type="ChEBI" id="CHEBI:58223"/>
        <dbReference type="ChEBI" id="CHEBI:58885"/>
        <dbReference type="ChEBI" id="CHEBI:140301"/>
        <dbReference type="EC" id="2.4.1.170"/>
    </reaction>
</comment>
<comment type="tissue specificity">
    <text evidence="3">Expressed in roots. Detected in stems and leaves.</text>
</comment>
<comment type="induction">
    <text evidence="3">Down-regulated by methyl jasmonate.</text>
</comment>
<comment type="similarity">
    <text evidence="5">Belongs to the UDP-glycosyltransferase family.</text>
</comment>
<dbReference type="EC" id="2.4.1.170" evidence="3"/>
<dbReference type="EMBL" id="KC473566">
    <property type="protein sequence ID" value="AGZ84546.1"/>
    <property type="molecule type" value="mRNA"/>
</dbReference>
<dbReference type="SMR" id="A0A067YBQ3"/>
<dbReference type="GO" id="GO:0050004">
    <property type="term" value="F:isoflavone 7-O-glucosyltransferase activity"/>
    <property type="evidence" value="ECO:0007669"/>
    <property type="project" value="UniProtKB-EC"/>
</dbReference>
<dbReference type="CDD" id="cd03784">
    <property type="entry name" value="GT1_Gtf-like"/>
    <property type="match status" value="1"/>
</dbReference>
<dbReference type="FunFam" id="3.40.50.2000:FF:000020">
    <property type="entry name" value="Glycosyltransferase"/>
    <property type="match status" value="1"/>
</dbReference>
<dbReference type="Gene3D" id="3.40.50.2000">
    <property type="entry name" value="Glycogen Phosphorylase B"/>
    <property type="match status" value="2"/>
</dbReference>
<dbReference type="InterPro" id="IPR050481">
    <property type="entry name" value="UDP-glycosyltransf_plant"/>
</dbReference>
<dbReference type="InterPro" id="IPR002213">
    <property type="entry name" value="UDP_glucos_trans"/>
</dbReference>
<dbReference type="InterPro" id="IPR035595">
    <property type="entry name" value="UDP_glycos_trans_CS"/>
</dbReference>
<dbReference type="PANTHER" id="PTHR48048">
    <property type="entry name" value="GLYCOSYLTRANSFERASE"/>
    <property type="match status" value="1"/>
</dbReference>
<dbReference type="PANTHER" id="PTHR48048:SF30">
    <property type="entry name" value="GLYCOSYLTRANSFERASE"/>
    <property type="match status" value="1"/>
</dbReference>
<dbReference type="Pfam" id="PF00201">
    <property type="entry name" value="UDPGT"/>
    <property type="match status" value="1"/>
</dbReference>
<dbReference type="SUPFAM" id="SSF53756">
    <property type="entry name" value="UDP-Glycosyltransferase/glycogen phosphorylase"/>
    <property type="match status" value="1"/>
</dbReference>
<dbReference type="PROSITE" id="PS00375">
    <property type="entry name" value="UDPGT"/>
    <property type="match status" value="1"/>
</dbReference>
<sequence length="451" mass="50258">MKGTIVLYPAMGRGHIVPMVELGKFLSTHHHATLSVKILLPSPPNSTTLRYITAVSAATPSITFLHLSPSQHLLRVLQTLISQSSKPKAFILDFFNHSAADVTQTLNIPTYYYFPNAASCVALMLYTPTIHHNTKNGNSSYNDTLRRIPGLPPLSPEDMPAPLLDRRSFESFANMSIQMRKSDGIIVNTFEKLENKAFLALKNGTCVSETSRSHSSTPETRKPRIFCVGPLVSNGGGEHDNDDSGCMSWLDLQPSRTVVFLSFGSYGRFSKSQIREIALGLERSGQRFLWVVRDPYERSELSLEELLPKGFLERTKERGMVVKNWAPQVKVLSHDSVGGFVTHCGWNSVLEAVSWGVPMVAWPLYAEQRLNRVVMVEEMKVALPLKEVDEDGFVRASELEERVRELMDSERGRGKEVRKRVLGATNDAVAALSDGGSSRIELNDLVGLWMQ</sequence>
<reference key="1">
    <citation type="journal article" date="2014" name="Plant Cell Rep.">
        <title>Molecular cloning and characterization of an isoflavone 7-O-glucosyltransferase from Pueraria lobata.</title>
        <authorList>
            <person name="Li J."/>
            <person name="Li Z."/>
            <person name="Li C."/>
            <person name="Gou J."/>
            <person name="Zhang Y."/>
        </authorList>
    </citation>
    <scope>NUCLEOTIDE SEQUENCE [MRNA]</scope>
    <scope>FUNCTION</scope>
    <scope>CATALYTIC ACTIVITY</scope>
    <scope>SUBSTRATE SPECIFICITY</scope>
    <scope>INDUCTION BY METHYL JASMONATE</scope>
    <scope>TISSUE SPECIFICITY</scope>
</reference>
<name>UGT13_PUEML</name>
<organism evidence="6">
    <name type="scientific">Pueraria montana var. lobata</name>
    <name type="common">Kudzu vine</name>
    <name type="synonym">Pueraria lobata</name>
    <dbReference type="NCBI Taxonomy" id="3893"/>
    <lineage>
        <taxon>Eukaryota</taxon>
        <taxon>Viridiplantae</taxon>
        <taxon>Streptophyta</taxon>
        <taxon>Embryophyta</taxon>
        <taxon>Tracheophyta</taxon>
        <taxon>Spermatophyta</taxon>
        <taxon>Magnoliopsida</taxon>
        <taxon>eudicotyledons</taxon>
        <taxon>Gunneridae</taxon>
        <taxon>Pentapetalae</taxon>
        <taxon>rosids</taxon>
        <taxon>fabids</taxon>
        <taxon>Fabales</taxon>
        <taxon>Fabaceae</taxon>
        <taxon>Papilionoideae</taxon>
        <taxon>50 kb inversion clade</taxon>
        <taxon>NPAAA clade</taxon>
        <taxon>indigoferoid/millettioid clade</taxon>
        <taxon>Phaseoleae</taxon>
        <taxon>Pueraria</taxon>
    </lineage>
</organism>
<proteinExistence type="evidence at protein level"/>
<accession>A0A067YBQ3</accession>